<keyword id="KW-0067">ATP-binding</keyword>
<keyword id="KW-0289">Folate biosynthesis</keyword>
<keyword id="KW-0418">Kinase</keyword>
<keyword id="KW-0547">Nucleotide-binding</keyword>
<keyword id="KW-1185">Reference proteome</keyword>
<keyword id="KW-0808">Transferase</keyword>
<proteinExistence type="inferred from homology"/>
<sequence>MLKIQGVKHFEKSRFFPFFSQNIRSFKYLALIGLGSNIEPEKKRFDMLFRVMMDDKRFKILSTSPMLINEAFGFKEQKDFTNAVMLIQTNLHARALLKVLLYYEVKFKRKRTFKNAPRTLDLDLLYFSQKVKRDKWCEVPHKGAKERVSVILPLGMI</sequence>
<protein>
    <recommendedName>
        <fullName evidence="1">2-amino-4-hydroxy-6-hydroxymethyldihydropteridine pyrophosphokinase</fullName>
        <ecNumber evidence="1">2.7.6.3</ecNumber>
    </recommendedName>
    <alternativeName>
        <fullName evidence="1">6-hydroxymethyl-7,8-dihydropterin pyrophosphokinase</fullName>
        <shortName evidence="1">PPPK</shortName>
    </alternativeName>
    <alternativeName>
        <fullName evidence="1">7,8-dihydro-6-hydroxymethylpterin-pyrophosphokinase</fullName>
        <shortName evidence="1">HPPK</shortName>
    </alternativeName>
</protein>
<name>HPPK_CAMJE</name>
<evidence type="ECO:0000250" key="1">
    <source>
        <dbReference type="UniProtKB" id="P26281"/>
    </source>
</evidence>
<evidence type="ECO:0000305" key="2"/>
<accession>Q9PJ54</accession>
<accession>Q0PC68</accession>
<organism>
    <name type="scientific">Campylobacter jejuni subsp. jejuni serotype O:2 (strain ATCC 700819 / NCTC 11168)</name>
    <dbReference type="NCBI Taxonomy" id="192222"/>
    <lineage>
        <taxon>Bacteria</taxon>
        <taxon>Pseudomonadati</taxon>
        <taxon>Campylobacterota</taxon>
        <taxon>Epsilonproteobacteria</taxon>
        <taxon>Campylobacterales</taxon>
        <taxon>Campylobacteraceae</taxon>
        <taxon>Campylobacter</taxon>
    </lineage>
</organism>
<reference key="1">
    <citation type="journal article" date="2000" name="Nature">
        <title>The genome sequence of the food-borne pathogen Campylobacter jejuni reveals hypervariable sequences.</title>
        <authorList>
            <person name="Parkhill J."/>
            <person name="Wren B.W."/>
            <person name="Mungall K.L."/>
            <person name="Ketley J.M."/>
            <person name="Churcher C.M."/>
            <person name="Basham D."/>
            <person name="Chillingworth T."/>
            <person name="Davies R.M."/>
            <person name="Feltwell T."/>
            <person name="Holroyd S."/>
            <person name="Jagels K."/>
            <person name="Karlyshev A.V."/>
            <person name="Moule S."/>
            <person name="Pallen M.J."/>
            <person name="Penn C.W."/>
            <person name="Quail M.A."/>
            <person name="Rajandream M.A."/>
            <person name="Rutherford K.M."/>
            <person name="van Vliet A.H.M."/>
            <person name="Whitehead S."/>
            <person name="Barrell B.G."/>
        </authorList>
    </citation>
    <scope>NUCLEOTIDE SEQUENCE [LARGE SCALE GENOMIC DNA]</scope>
    <source>
        <strain>ATCC 700819 / NCTC 11168</strain>
    </source>
</reference>
<comment type="function">
    <text evidence="1">Catalyzes the transfer of pyrophosphate from adenosine triphosphate (ATP) to 6-hydroxymethyl-7,8-dihydropterin, an enzymatic step in folate biosynthesis pathway.</text>
</comment>
<comment type="catalytic activity">
    <reaction evidence="1">
        <text>6-hydroxymethyl-7,8-dihydropterin + ATP = (7,8-dihydropterin-6-yl)methyl diphosphate + AMP + H(+)</text>
        <dbReference type="Rhea" id="RHEA:11412"/>
        <dbReference type="ChEBI" id="CHEBI:15378"/>
        <dbReference type="ChEBI" id="CHEBI:30616"/>
        <dbReference type="ChEBI" id="CHEBI:44841"/>
        <dbReference type="ChEBI" id="CHEBI:72950"/>
        <dbReference type="ChEBI" id="CHEBI:456215"/>
        <dbReference type="EC" id="2.7.6.3"/>
    </reaction>
</comment>
<comment type="pathway">
    <text evidence="1">Cofactor biosynthesis; tetrahydrofolate biosynthesis; 2-amino-4-hydroxy-6-hydroxymethyl-7,8-dihydropteridine diphosphate from 7,8-dihydroneopterin triphosphate: step 4/4.</text>
</comment>
<comment type="similarity">
    <text evidence="2">Belongs to the HPPK family.</text>
</comment>
<gene>
    <name type="primary">folK</name>
    <name type="ordered locus">Cj0065c</name>
</gene>
<feature type="chain" id="PRO_0000168248" description="2-amino-4-hydroxy-6-hydroxymethyldihydropteridine pyrophosphokinase">
    <location>
        <begin position="1"/>
        <end position="157"/>
    </location>
</feature>
<dbReference type="EC" id="2.7.6.3" evidence="1"/>
<dbReference type="EMBL" id="AL111168">
    <property type="protein sequence ID" value="CAL34239.1"/>
    <property type="molecule type" value="Genomic_DNA"/>
</dbReference>
<dbReference type="PIR" id="E81422">
    <property type="entry name" value="E81422"/>
</dbReference>
<dbReference type="RefSeq" id="WP_002851803.1">
    <property type="nucleotide sequence ID" value="NZ_SZUC01000005.1"/>
</dbReference>
<dbReference type="RefSeq" id="YP_002343529.1">
    <property type="nucleotide sequence ID" value="NC_002163.1"/>
</dbReference>
<dbReference type="SMR" id="Q9PJ54"/>
<dbReference type="IntAct" id="Q9PJ54">
    <property type="interactions" value="1"/>
</dbReference>
<dbReference type="STRING" id="192222.Cj0065c"/>
<dbReference type="PaxDb" id="192222-Cj0065c"/>
<dbReference type="EnsemblBacteria" id="CAL34239">
    <property type="protein sequence ID" value="CAL34239"/>
    <property type="gene ID" value="Cj0065c"/>
</dbReference>
<dbReference type="GeneID" id="904396"/>
<dbReference type="KEGG" id="cje:Cj0065c"/>
<dbReference type="PATRIC" id="fig|192222.6.peg.64"/>
<dbReference type="eggNOG" id="COG0801">
    <property type="taxonomic scope" value="Bacteria"/>
</dbReference>
<dbReference type="HOGENOM" id="CLU_097916_5_0_7"/>
<dbReference type="OrthoDB" id="9808041at2"/>
<dbReference type="UniPathway" id="UPA00077">
    <property type="reaction ID" value="UER00155"/>
</dbReference>
<dbReference type="Proteomes" id="UP000000799">
    <property type="component" value="Chromosome"/>
</dbReference>
<dbReference type="GO" id="GO:0003848">
    <property type="term" value="F:2-amino-4-hydroxy-6-hydroxymethyldihydropteridine diphosphokinase activity"/>
    <property type="evidence" value="ECO:0007669"/>
    <property type="project" value="UniProtKB-EC"/>
</dbReference>
<dbReference type="GO" id="GO:0005524">
    <property type="term" value="F:ATP binding"/>
    <property type="evidence" value="ECO:0007669"/>
    <property type="project" value="UniProtKB-KW"/>
</dbReference>
<dbReference type="GO" id="GO:0016301">
    <property type="term" value="F:kinase activity"/>
    <property type="evidence" value="ECO:0007669"/>
    <property type="project" value="UniProtKB-KW"/>
</dbReference>
<dbReference type="GO" id="GO:0046656">
    <property type="term" value="P:folic acid biosynthetic process"/>
    <property type="evidence" value="ECO:0007669"/>
    <property type="project" value="UniProtKB-KW"/>
</dbReference>
<dbReference type="GO" id="GO:0046654">
    <property type="term" value="P:tetrahydrofolate biosynthetic process"/>
    <property type="evidence" value="ECO:0007669"/>
    <property type="project" value="UniProtKB-UniPathway"/>
</dbReference>
<dbReference type="CDD" id="cd00483">
    <property type="entry name" value="HPPK"/>
    <property type="match status" value="1"/>
</dbReference>
<dbReference type="Gene3D" id="3.30.70.560">
    <property type="entry name" value="7,8-Dihydro-6-hydroxymethylpterin-pyrophosphokinase HPPK"/>
    <property type="match status" value="1"/>
</dbReference>
<dbReference type="InterPro" id="IPR000550">
    <property type="entry name" value="Hppk"/>
</dbReference>
<dbReference type="InterPro" id="IPR035907">
    <property type="entry name" value="Hppk_sf"/>
</dbReference>
<dbReference type="NCBIfam" id="TIGR01498">
    <property type="entry name" value="folK"/>
    <property type="match status" value="1"/>
</dbReference>
<dbReference type="PANTHER" id="PTHR43071">
    <property type="entry name" value="2-AMINO-4-HYDROXY-6-HYDROXYMETHYLDIHYDROPTERIDINE PYROPHOSPHOKINASE"/>
    <property type="match status" value="1"/>
</dbReference>
<dbReference type="PANTHER" id="PTHR43071:SF1">
    <property type="entry name" value="2-AMINO-4-HYDROXY-6-HYDROXYMETHYLDIHYDROPTERIDINE PYROPHOSPHOKINASE"/>
    <property type="match status" value="1"/>
</dbReference>
<dbReference type="Pfam" id="PF01288">
    <property type="entry name" value="HPPK"/>
    <property type="match status" value="1"/>
</dbReference>
<dbReference type="SUPFAM" id="SSF55083">
    <property type="entry name" value="6-hydroxymethyl-7,8-dihydropterin pyrophosphokinase, HPPK"/>
    <property type="match status" value="1"/>
</dbReference>
<dbReference type="PROSITE" id="PS00794">
    <property type="entry name" value="HPPK"/>
    <property type="match status" value="1"/>
</dbReference>